<comment type="function">
    <text evidence="1 6">Transcriptional activator that binds specific DNA sequence. Functions as a response regulator involved in His-to-Asp phosphorelay signal transduction system. Phosphorylation of the Asp residue in the receiver domain activates the ability of the protein to promote the transcription of target genes. May directly activate some type-A response regulators in response to cytokinins (By similarity). Functions as a response regulator in response to cytokinins (PubMed:22383541).</text>
</comment>
<comment type="subcellular location">
    <subcellularLocation>
        <location evidence="3 6">Nucleus</location>
    </subcellularLocation>
</comment>
<comment type="PTM">
    <text evidence="10">Two-component system major event consists of a His-to-Asp phosphorelay between a sensor histidine kinase (HK) and a response regulator (RR). In plants, the His-to-Asp phosphorelay involves an additional intermediate named Histidine-containing phosphotransfer protein (HPt). This multistep phosphorelay consists of a His-Asp-His-Asp sequential transfer of a phosphate group between first a His and an Asp of the HK protein, followed by the transfer to a conserved His of the HPt protein and finally the transfer to an Asp in the receiver domain of the RR protein.</text>
</comment>
<comment type="disruption phenotype">
    <text evidence="5">Dwarf, narrow leaf, lesion mimic, low tillering, late heading and low fertility phenotypes.</text>
</comment>
<comment type="similarity">
    <text evidence="10">Belongs to the ARR family. Type-B subfamily.</text>
</comment>
<organism>
    <name type="scientific">Oryza sativa subsp. japonica</name>
    <name type="common">Rice</name>
    <dbReference type="NCBI Taxonomy" id="39947"/>
    <lineage>
        <taxon>Eukaryota</taxon>
        <taxon>Viridiplantae</taxon>
        <taxon>Streptophyta</taxon>
        <taxon>Embryophyta</taxon>
        <taxon>Tracheophyta</taxon>
        <taxon>Spermatophyta</taxon>
        <taxon>Magnoliopsida</taxon>
        <taxon>Liliopsida</taxon>
        <taxon>Poales</taxon>
        <taxon>Poaceae</taxon>
        <taxon>BOP clade</taxon>
        <taxon>Oryzoideae</taxon>
        <taxon>Oryzeae</taxon>
        <taxon>Oryzinae</taxon>
        <taxon>Oryza</taxon>
        <taxon>Oryza sativa</taxon>
    </lineage>
</organism>
<sequence length="696" mass="75950">MLLGALRMEERKGLMGRERDQFPVGMRVLAVDDDPVCLKVLETLLRRCQYHVTSTNQAITALKLLRENRDMFDLVISDVHMPDMDGFKLLELVGLEMDLPVIMLSVNGETKTVMKGITHGACDYLLKPVRIEELRNIWQHVVRRKFGNRERNNLDFSKECNKPQSADTDHGPYQPTCGSSDQNGRSSRKRKELHGEDDDEGDDNDYQENDEPSAAKKPRVVWSVELHRKFVAAVNQLGIDKAVPKRILELMNVEKLTRENVASHLQKYRLYLKRLGAVASQQASIVAAFGGRDPSFLHIGAFEGLQSYQPFAPSAALPSFNPHGLLTRTSAAAAFGLQELAAPSSTIQTSTGNVTVGHCLEENQQANLAQGLTAAIGQPQLQQNWIHQEGNGLSDVFSGSSLTNTLSSTLQRVPSSSLPPQELLECKQAKVSMPPSIRIPPSSSALLERTLGVSTNLGDSSISQQGALPIDGGFSADRLPLHSSFDGAVATKLDTSLAASQREIGQQGKFSVSMLVSPSDNLALAKNAKTGASSSGSTIILPLDTARHSDYLQFGGASNSLQKMDGQKQDHIQSSNIIWSSMPSTQLPSDTQIHNTQNQRLDSGSFNHNIGAHLADQTNASASILPQMKFDTRISEEKMKQKNTYDLGSSKLQGGFNSSGCNFDGLLNSIIKVEKDDLPFMDNELGCDLFPLGACI</sequence>
<protein>
    <recommendedName>
        <fullName evidence="10">Two-component response regulator ORR22</fullName>
    </recommendedName>
    <alternativeName>
        <fullName evidence="7">OsRRB4</fullName>
    </alternativeName>
</protein>
<accession>Q5SML5</accession>
<accession>A0A0P0WTP4</accession>
<evidence type="ECO:0000250" key="1">
    <source>
        <dbReference type="UniProtKB" id="Q940D0"/>
    </source>
</evidence>
<evidence type="ECO:0000255" key="2">
    <source>
        <dbReference type="PROSITE-ProRule" id="PRU00169"/>
    </source>
</evidence>
<evidence type="ECO:0000255" key="3">
    <source>
        <dbReference type="PROSITE-ProRule" id="PRU00625"/>
    </source>
</evidence>
<evidence type="ECO:0000256" key="4">
    <source>
        <dbReference type="SAM" id="MobiDB-lite"/>
    </source>
</evidence>
<evidence type="ECO:0000269" key="5">
    <source>
    </source>
</evidence>
<evidence type="ECO:0000269" key="6">
    <source>
    </source>
</evidence>
<evidence type="ECO:0000303" key="7">
    <source>
    </source>
</evidence>
<evidence type="ECO:0000303" key="8">
    <source>
    </source>
</evidence>
<evidence type="ECO:0000303" key="9">
    <source>
    </source>
</evidence>
<evidence type="ECO:0000305" key="10"/>
<evidence type="ECO:0000312" key="11">
    <source>
        <dbReference type="EMBL" id="BAD72541.1"/>
    </source>
</evidence>
<evidence type="ECO:0000312" key="12">
    <source>
        <dbReference type="EMBL" id="BAF18900.1"/>
    </source>
</evidence>
<evidence type="ECO:0000312" key="13">
    <source>
        <dbReference type="EMBL" id="EEE65213.1"/>
    </source>
</evidence>
<feature type="chain" id="PRO_0000433842" description="Two-component response regulator ORR22">
    <location>
        <begin position="1"/>
        <end position="696"/>
    </location>
</feature>
<feature type="domain" description="Response regulatory" evidence="2">
    <location>
        <begin position="27"/>
        <end position="142"/>
    </location>
</feature>
<feature type="DNA-binding region" description="Myb-like GARP" evidence="3">
    <location>
        <begin position="214"/>
        <end position="273"/>
    </location>
</feature>
<feature type="region of interest" description="Disordered" evidence="4">
    <location>
        <begin position="154"/>
        <end position="214"/>
    </location>
</feature>
<feature type="compositionally biased region" description="Polar residues" evidence="4">
    <location>
        <begin position="176"/>
        <end position="185"/>
    </location>
</feature>
<feature type="compositionally biased region" description="Acidic residues" evidence="4">
    <location>
        <begin position="195"/>
        <end position="211"/>
    </location>
</feature>
<feature type="modified residue" description="4-aspartylphosphate" evidence="2">
    <location>
        <position position="78"/>
    </location>
</feature>
<reference key="1">
    <citation type="journal article" date="2006" name="Gene">
        <title>Identification and characterization of cytokinin-signalling gene families in rice.</title>
        <authorList>
            <person name="Ito Y."/>
            <person name="Kurata N."/>
        </authorList>
    </citation>
    <scope>NUCLEOTIDE SEQUENCE [GENOMIC DNA]</scope>
    <source>
        <strain>cv. Nipponbare</strain>
    </source>
</reference>
<reference key="2">
    <citation type="journal article" date="2005" name="Nature">
        <title>The map-based sequence of the rice genome.</title>
        <authorList>
            <consortium name="International rice genome sequencing project (IRGSP)"/>
        </authorList>
    </citation>
    <scope>NUCLEOTIDE SEQUENCE [LARGE SCALE GENOMIC DNA]</scope>
    <source>
        <strain>cv. Nipponbare</strain>
    </source>
</reference>
<reference key="3">
    <citation type="journal article" date="2008" name="Nucleic Acids Res.">
        <title>The rice annotation project database (RAP-DB): 2008 update.</title>
        <authorList>
            <consortium name="The rice annotation project (RAP)"/>
        </authorList>
    </citation>
    <scope>GENOME REANNOTATION</scope>
    <source>
        <strain>cv. Nipponbare</strain>
    </source>
</reference>
<reference key="4">
    <citation type="journal article" date="2013" name="Rice">
        <title>Improvement of the Oryza sativa Nipponbare reference genome using next generation sequence and optical map data.</title>
        <authorList>
            <person name="Kawahara Y."/>
            <person name="de la Bastide M."/>
            <person name="Hamilton J.P."/>
            <person name="Kanamori H."/>
            <person name="McCombie W.R."/>
            <person name="Ouyang S."/>
            <person name="Schwartz D.C."/>
            <person name="Tanaka T."/>
            <person name="Wu J."/>
            <person name="Zhou S."/>
            <person name="Childs K.L."/>
            <person name="Davidson R.M."/>
            <person name="Lin H."/>
            <person name="Quesada-Ocampo L."/>
            <person name="Vaillancourt B."/>
            <person name="Sakai H."/>
            <person name="Lee S.S."/>
            <person name="Kim J."/>
            <person name="Numa H."/>
            <person name="Itoh T."/>
            <person name="Buell C.R."/>
            <person name="Matsumoto T."/>
        </authorList>
    </citation>
    <scope>GENOME REANNOTATION</scope>
    <source>
        <strain>cv. Nipponbare</strain>
    </source>
</reference>
<reference key="5">
    <citation type="journal article" date="2005" name="PLoS Biol.">
        <title>The genomes of Oryza sativa: a history of duplications.</title>
        <authorList>
            <person name="Yu J."/>
            <person name="Wang J."/>
            <person name="Lin W."/>
            <person name="Li S."/>
            <person name="Li H."/>
            <person name="Zhou J."/>
            <person name="Ni P."/>
            <person name="Dong W."/>
            <person name="Hu S."/>
            <person name="Zeng C."/>
            <person name="Zhang J."/>
            <person name="Zhang Y."/>
            <person name="Li R."/>
            <person name="Xu Z."/>
            <person name="Li S."/>
            <person name="Li X."/>
            <person name="Zheng H."/>
            <person name="Cong L."/>
            <person name="Lin L."/>
            <person name="Yin J."/>
            <person name="Geng J."/>
            <person name="Li G."/>
            <person name="Shi J."/>
            <person name="Liu J."/>
            <person name="Lv H."/>
            <person name="Li J."/>
            <person name="Wang J."/>
            <person name="Deng Y."/>
            <person name="Ran L."/>
            <person name="Shi X."/>
            <person name="Wang X."/>
            <person name="Wu Q."/>
            <person name="Li C."/>
            <person name="Ren X."/>
            <person name="Wang J."/>
            <person name="Wang X."/>
            <person name="Li D."/>
            <person name="Liu D."/>
            <person name="Zhang X."/>
            <person name="Ji Z."/>
            <person name="Zhao W."/>
            <person name="Sun Y."/>
            <person name="Zhang Z."/>
            <person name="Bao J."/>
            <person name="Han Y."/>
            <person name="Dong L."/>
            <person name="Ji J."/>
            <person name="Chen P."/>
            <person name="Wu S."/>
            <person name="Liu J."/>
            <person name="Xiao Y."/>
            <person name="Bu D."/>
            <person name="Tan J."/>
            <person name="Yang L."/>
            <person name="Ye C."/>
            <person name="Zhang J."/>
            <person name="Xu J."/>
            <person name="Zhou Y."/>
            <person name="Yu Y."/>
            <person name="Zhang B."/>
            <person name="Zhuang S."/>
            <person name="Wei H."/>
            <person name="Liu B."/>
            <person name="Lei M."/>
            <person name="Yu H."/>
            <person name="Li Y."/>
            <person name="Xu H."/>
            <person name="Wei S."/>
            <person name="He X."/>
            <person name="Fang L."/>
            <person name="Zhang Z."/>
            <person name="Zhang Y."/>
            <person name="Huang X."/>
            <person name="Su Z."/>
            <person name="Tong W."/>
            <person name="Li J."/>
            <person name="Tong Z."/>
            <person name="Li S."/>
            <person name="Ye J."/>
            <person name="Wang L."/>
            <person name="Fang L."/>
            <person name="Lei T."/>
            <person name="Chen C.-S."/>
            <person name="Chen H.-C."/>
            <person name="Xu Z."/>
            <person name="Li H."/>
            <person name="Huang H."/>
            <person name="Zhang F."/>
            <person name="Xu H."/>
            <person name="Li N."/>
            <person name="Zhao C."/>
            <person name="Li S."/>
            <person name="Dong L."/>
            <person name="Huang Y."/>
            <person name="Li L."/>
            <person name="Xi Y."/>
            <person name="Qi Q."/>
            <person name="Li W."/>
            <person name="Zhang B."/>
            <person name="Hu W."/>
            <person name="Zhang Y."/>
            <person name="Tian X."/>
            <person name="Jiao Y."/>
            <person name="Liang X."/>
            <person name="Jin J."/>
            <person name="Gao L."/>
            <person name="Zheng W."/>
            <person name="Hao B."/>
            <person name="Liu S.-M."/>
            <person name="Wang W."/>
            <person name="Yuan L."/>
            <person name="Cao M."/>
            <person name="McDermott J."/>
            <person name="Samudrala R."/>
            <person name="Wang J."/>
            <person name="Wong G.K.-S."/>
            <person name="Yang H."/>
        </authorList>
    </citation>
    <scope>NUCLEOTIDE SEQUENCE [LARGE SCALE GENOMIC DNA]</scope>
    <source>
        <strain>cv. Nipponbare</strain>
    </source>
</reference>
<reference key="6">
    <citation type="journal article" date="2003" name="Science">
        <title>Collection, mapping, and annotation of over 28,000 cDNA clones from japonica rice.</title>
        <authorList>
            <consortium name="The rice full-length cDNA consortium"/>
        </authorList>
    </citation>
    <scope>NUCLEOTIDE SEQUENCE [LARGE SCALE MRNA]</scope>
    <source>
        <strain>cv. Nipponbare</strain>
    </source>
</reference>
<reference key="7">
    <citation type="journal article" date="2006" name="Plant Physiol.">
        <title>Whole-genome analysis of Oryza sativa reveals similar architecture of two-component signaling machinery with Arabidopsis.</title>
        <authorList>
            <person name="Pareek A."/>
            <person name="Singh A."/>
            <person name="Kumar M."/>
            <person name="Kushwaha H.R."/>
            <person name="Lynn A.M."/>
            <person name="Singla-Pareek S.L."/>
        </authorList>
    </citation>
    <scope>DISRUPTION PHENOTYPE</scope>
</reference>
<reference key="8">
    <citation type="journal article" date="2007" name="Plant Physiol.">
        <title>Nomenclature for two-component signaling elements of rice.</title>
        <authorList>
            <person name="Schaller G.E."/>
            <person name="Doi K."/>
            <person name="Hwang I."/>
            <person name="Kieber J.J."/>
            <person name="Khurana J.P."/>
            <person name="Kurata N."/>
            <person name="Mizuno T."/>
            <person name="Pareek A."/>
            <person name="Shiu S.H."/>
            <person name="Wu P."/>
            <person name="Yip W.K."/>
        </authorList>
    </citation>
    <scope>GENE FAMILY</scope>
    <scope>NOMENCLATURE</scope>
</reference>
<reference key="9">
    <citation type="journal article" date="2012" name="Plant Physiol.">
        <title>Characterization of genes involved in cytokinin signaling and metabolism from rice.</title>
        <authorList>
            <person name="Tsai Y.C."/>
            <person name="Weir N.R."/>
            <person name="Hill K."/>
            <person name="Zhang W."/>
            <person name="Kim H.J."/>
            <person name="Shiu S.H."/>
            <person name="Schaller G.E."/>
            <person name="Kieber J.J."/>
        </authorList>
    </citation>
    <scope>FUNCTION</scope>
    <scope>SUBCELLULAR LOCATION</scope>
</reference>
<dbReference type="EMBL" id="BR000251">
    <property type="protein sequence ID" value="FAA00255.1"/>
    <property type="molecule type" value="Genomic_DNA"/>
</dbReference>
<dbReference type="EMBL" id="AP007226">
    <property type="protein sequence ID" value="BAD72541.1"/>
    <property type="molecule type" value="Genomic_DNA"/>
</dbReference>
<dbReference type="EMBL" id="AP008212">
    <property type="protein sequence ID" value="BAF18900.1"/>
    <property type="molecule type" value="Genomic_DNA"/>
</dbReference>
<dbReference type="EMBL" id="AP014962">
    <property type="protein sequence ID" value="BAS96483.1"/>
    <property type="molecule type" value="Genomic_DNA"/>
</dbReference>
<dbReference type="EMBL" id="CM000143">
    <property type="protein sequence ID" value="EEE65213.1"/>
    <property type="molecule type" value="Genomic_DNA"/>
</dbReference>
<dbReference type="EMBL" id="AK102959">
    <property type="protein sequence ID" value="BAG95803.1"/>
    <property type="molecule type" value="mRNA"/>
</dbReference>
<dbReference type="RefSeq" id="XP_015640894.1">
    <property type="nucleotide sequence ID" value="XM_015785408.1"/>
</dbReference>
<dbReference type="SMR" id="Q5SML5"/>
<dbReference type="FunCoup" id="Q5SML5">
    <property type="interactions" value="815"/>
</dbReference>
<dbReference type="STRING" id="39947.Q5SML5"/>
<dbReference type="PaxDb" id="39947-Q5SML5"/>
<dbReference type="EnsemblPlants" id="Os06t0183100-01">
    <property type="protein sequence ID" value="Os06t0183100-01"/>
    <property type="gene ID" value="Os06g0183100"/>
</dbReference>
<dbReference type="EnsemblPlants" id="Os06t0183100-02">
    <property type="protein sequence ID" value="Os06t0183100-02"/>
    <property type="gene ID" value="Os06g0183100"/>
</dbReference>
<dbReference type="Gramene" id="Os06t0183100-01">
    <property type="protein sequence ID" value="Os06t0183100-01"/>
    <property type="gene ID" value="Os06g0183100"/>
</dbReference>
<dbReference type="Gramene" id="Os06t0183100-02">
    <property type="protein sequence ID" value="Os06t0183100-02"/>
    <property type="gene ID" value="Os06g0183100"/>
</dbReference>
<dbReference type="KEGG" id="dosa:Os06g0183100"/>
<dbReference type="eggNOG" id="KOG1601">
    <property type="taxonomic scope" value="Eukaryota"/>
</dbReference>
<dbReference type="HOGENOM" id="CLU_024359_0_0_1"/>
<dbReference type="InParanoid" id="Q5SML5"/>
<dbReference type="OMA" id="NGIASHC"/>
<dbReference type="OrthoDB" id="60033at2759"/>
<dbReference type="Proteomes" id="UP000000763">
    <property type="component" value="Chromosome 6"/>
</dbReference>
<dbReference type="Proteomes" id="UP000007752">
    <property type="component" value="Chromosome 6"/>
</dbReference>
<dbReference type="Proteomes" id="UP000059680">
    <property type="component" value="Chromosome 6"/>
</dbReference>
<dbReference type="GO" id="GO:0005634">
    <property type="term" value="C:nucleus"/>
    <property type="evidence" value="ECO:0000314"/>
    <property type="project" value="UniProtKB"/>
</dbReference>
<dbReference type="GO" id="GO:0003700">
    <property type="term" value="F:DNA-binding transcription factor activity"/>
    <property type="evidence" value="ECO:0007669"/>
    <property type="project" value="InterPro"/>
</dbReference>
<dbReference type="GO" id="GO:0043565">
    <property type="term" value="F:sequence-specific DNA binding"/>
    <property type="evidence" value="ECO:0000314"/>
    <property type="project" value="UniProtKB"/>
</dbReference>
<dbReference type="GO" id="GO:0009736">
    <property type="term" value="P:cytokinin-activated signaling pathway"/>
    <property type="evidence" value="ECO:0000314"/>
    <property type="project" value="UniProtKB"/>
</dbReference>
<dbReference type="GO" id="GO:0000160">
    <property type="term" value="P:phosphorelay signal transduction system"/>
    <property type="evidence" value="ECO:0000314"/>
    <property type="project" value="UniProtKB"/>
</dbReference>
<dbReference type="GO" id="GO:0045893">
    <property type="term" value="P:positive regulation of DNA-templated transcription"/>
    <property type="evidence" value="ECO:0000314"/>
    <property type="project" value="UniProtKB"/>
</dbReference>
<dbReference type="CDD" id="cd17584">
    <property type="entry name" value="REC_typeB_ARR-like"/>
    <property type="match status" value="1"/>
</dbReference>
<dbReference type="FunFam" id="1.10.10.60:FF:000007">
    <property type="entry name" value="Two-component response regulator"/>
    <property type="match status" value="1"/>
</dbReference>
<dbReference type="FunFam" id="3.40.50.2300:FF:000132">
    <property type="entry name" value="Two-component response regulator"/>
    <property type="match status" value="1"/>
</dbReference>
<dbReference type="Gene3D" id="3.40.50.2300">
    <property type="match status" value="1"/>
</dbReference>
<dbReference type="Gene3D" id="1.10.10.60">
    <property type="entry name" value="Homeodomain-like"/>
    <property type="match status" value="1"/>
</dbReference>
<dbReference type="InterPro" id="IPR045279">
    <property type="entry name" value="ARR-like"/>
</dbReference>
<dbReference type="InterPro" id="IPR011006">
    <property type="entry name" value="CheY-like_superfamily"/>
</dbReference>
<dbReference type="InterPro" id="IPR009057">
    <property type="entry name" value="Homeodomain-like_sf"/>
</dbReference>
<dbReference type="InterPro" id="IPR017930">
    <property type="entry name" value="Myb_dom"/>
</dbReference>
<dbReference type="InterPro" id="IPR006447">
    <property type="entry name" value="Myb_dom_plants"/>
</dbReference>
<dbReference type="InterPro" id="IPR017053">
    <property type="entry name" value="Response_reg_B-typ_pln"/>
</dbReference>
<dbReference type="InterPro" id="IPR001005">
    <property type="entry name" value="SANT/Myb"/>
</dbReference>
<dbReference type="InterPro" id="IPR001789">
    <property type="entry name" value="Sig_transdc_resp-reg_receiver"/>
</dbReference>
<dbReference type="NCBIfam" id="TIGR01557">
    <property type="entry name" value="myb_SHAQKYF"/>
    <property type="match status" value="1"/>
</dbReference>
<dbReference type="PANTHER" id="PTHR43874">
    <property type="entry name" value="TWO-COMPONENT RESPONSE REGULATOR"/>
    <property type="match status" value="1"/>
</dbReference>
<dbReference type="PANTHER" id="PTHR43874:SF135">
    <property type="entry name" value="TWO-COMPONENT RESPONSE REGULATOR ORR22"/>
    <property type="match status" value="1"/>
</dbReference>
<dbReference type="Pfam" id="PF00249">
    <property type="entry name" value="Myb_DNA-binding"/>
    <property type="match status" value="1"/>
</dbReference>
<dbReference type="Pfam" id="PF00072">
    <property type="entry name" value="Response_reg"/>
    <property type="match status" value="1"/>
</dbReference>
<dbReference type="PIRSF" id="PIRSF036392">
    <property type="entry name" value="RR_ARR_type-B"/>
    <property type="match status" value="1"/>
</dbReference>
<dbReference type="SMART" id="SM00448">
    <property type="entry name" value="REC"/>
    <property type="match status" value="1"/>
</dbReference>
<dbReference type="SUPFAM" id="SSF52172">
    <property type="entry name" value="CheY-like"/>
    <property type="match status" value="1"/>
</dbReference>
<dbReference type="SUPFAM" id="SSF46689">
    <property type="entry name" value="Homeodomain-like"/>
    <property type="match status" value="1"/>
</dbReference>
<dbReference type="PROSITE" id="PS51294">
    <property type="entry name" value="HTH_MYB"/>
    <property type="match status" value="1"/>
</dbReference>
<dbReference type="PROSITE" id="PS50110">
    <property type="entry name" value="RESPONSE_REGULATORY"/>
    <property type="match status" value="1"/>
</dbReference>
<gene>
    <name evidence="9" type="primary">RR22</name>
    <name evidence="8" type="synonym">ORR2</name>
    <name evidence="12" type="ordered locus">Os06g0183100</name>
    <name evidence="10" type="ordered locus">LOC_Os06g08440</name>
    <name evidence="13" type="ORF">OsJ_20357</name>
    <name evidence="11" type="ORF">OSJNBb0036B04.15</name>
</gene>
<keyword id="KW-0010">Activator</keyword>
<keyword id="KW-0932">Cytokinin signaling pathway</keyword>
<keyword id="KW-0238">DNA-binding</keyword>
<keyword id="KW-0539">Nucleus</keyword>
<keyword id="KW-0597">Phosphoprotein</keyword>
<keyword id="KW-1185">Reference proteome</keyword>
<keyword id="KW-0804">Transcription</keyword>
<keyword id="KW-0805">Transcription regulation</keyword>
<keyword id="KW-0902">Two-component regulatory system</keyword>
<name>ORR22_ORYSJ</name>
<proteinExistence type="evidence at transcript level"/>